<proteinExistence type="evidence at transcript level"/>
<evidence type="ECO:0000250" key="1"/>
<evidence type="ECO:0000250" key="2">
    <source>
        <dbReference type="UniProtKB" id="P40855"/>
    </source>
</evidence>
<evidence type="ECO:0000250" key="3">
    <source>
        <dbReference type="UniProtKB" id="Q8VCI5"/>
    </source>
</evidence>
<evidence type="ECO:0000250" key="4">
    <source>
        <dbReference type="UniProtKB" id="Q9QYU1"/>
    </source>
</evidence>
<evidence type="ECO:0000256" key="5">
    <source>
        <dbReference type="SAM" id="MobiDB-lite"/>
    </source>
</evidence>
<evidence type="ECO:0000305" key="6"/>
<feature type="initiator methionine" description="Removed" evidence="2">
    <location>
        <position position="1"/>
    </location>
</feature>
<feature type="chain" id="PRO_0000253623" description="Peroxisomal biogenesis factor 19">
    <location>
        <begin position="2"/>
        <end position="296"/>
    </location>
</feature>
<feature type="propeptide" id="PRO_0000396699" description="Removed in mature form" evidence="1">
    <location>
        <begin position="297"/>
        <end position="299"/>
    </location>
</feature>
<feature type="region of interest" description="Disordered" evidence="5">
    <location>
        <begin position="1"/>
        <end position="63"/>
    </location>
</feature>
<feature type="region of interest" description="Necessary for PEX19 function on peroxisome biogenesis">
    <location>
        <begin position="2"/>
        <end position="91"/>
    </location>
</feature>
<feature type="region of interest" description="Docking to the peroxisome membrane and binding to PEX3">
    <location>
        <begin position="2"/>
        <end position="56"/>
    </location>
</feature>
<feature type="compositionally biased region" description="Acidic residues" evidence="5">
    <location>
        <begin position="16"/>
        <end position="27"/>
    </location>
</feature>
<feature type="modified residue" description="N-acetylalanine" evidence="2">
    <location>
        <position position="2"/>
    </location>
</feature>
<feature type="modified residue" description="Phosphoserine" evidence="2">
    <location>
        <position position="35"/>
    </location>
</feature>
<feature type="modified residue" description="Phosphoserine" evidence="2">
    <location>
        <position position="54"/>
    </location>
</feature>
<feature type="modified residue" description="Phosphoserine" evidence="4">
    <location>
        <position position="66"/>
    </location>
</feature>
<feature type="modified residue" description="Phosphothreonine" evidence="3">
    <location>
        <position position="236"/>
    </location>
</feature>
<feature type="modified residue" description="Cysteine methyl ester" evidence="1">
    <location>
        <position position="296"/>
    </location>
</feature>
<feature type="lipid moiety-binding region" description="S-farnesyl cysteine" evidence="1">
    <location>
        <position position="296"/>
    </location>
</feature>
<reference key="1">
    <citation type="submission" date="2005-08" db="EMBL/GenBank/DDBJ databases">
        <authorList>
            <consortium name="NIH - Mammalian Gene Collection (MGC) project"/>
        </authorList>
    </citation>
    <scope>NUCLEOTIDE SEQUENCE [LARGE SCALE MRNA]</scope>
    <source>
        <strain>Crossbred X Angus</strain>
        <tissue>Ileum</tissue>
    </source>
</reference>
<gene>
    <name type="primary">PEX19</name>
    <name type="synonym">PXF</name>
</gene>
<sequence length="299" mass="32667">MAAAEGDGGVRAEADRELEELLESALDDFDKAKPSPAPPPTTTAPDASGPQKRSPGDTAKDALFASQEKFFQELFDSELASQATAEFEKAMKELAEEEPHLVEQFQKLSEAAGRVGSDATSQQEFTSCLKETLSGLAKNATDLQNSGMSEEELTKAMEGLGMDEGDGEGTILPIMQSIMQNLLSRDVLYPSLKEITEKYPEWLRAHRDSLPPEQFEKYQEQHSVMGKICEQFEAETPTDSEATQKARFEVVLDLMQQLQDLGHPPKELAGEMPPGLNFDLDALNLSGPPGANGEQCLIM</sequence>
<protein>
    <recommendedName>
        <fullName>Peroxisomal biogenesis factor 19</fullName>
    </recommendedName>
    <alternativeName>
        <fullName>Peroxin-19</fullName>
    </alternativeName>
    <alternativeName>
        <fullName>Peroxisomal farnesylated protein</fullName>
    </alternativeName>
</protein>
<accession>Q3SZD1</accession>
<name>PEX19_BOVIN</name>
<keyword id="KW-0007">Acetylation</keyword>
<keyword id="KW-0963">Cytoplasm</keyword>
<keyword id="KW-0449">Lipoprotein</keyword>
<keyword id="KW-0472">Membrane</keyword>
<keyword id="KW-0488">Methylation</keyword>
<keyword id="KW-0576">Peroxisome</keyword>
<keyword id="KW-0962">Peroxisome biogenesis</keyword>
<keyword id="KW-0597">Phosphoprotein</keyword>
<keyword id="KW-0636">Prenylation</keyword>
<keyword id="KW-1185">Reference proteome</keyword>
<organism>
    <name type="scientific">Bos taurus</name>
    <name type="common">Bovine</name>
    <dbReference type="NCBI Taxonomy" id="9913"/>
    <lineage>
        <taxon>Eukaryota</taxon>
        <taxon>Metazoa</taxon>
        <taxon>Chordata</taxon>
        <taxon>Craniata</taxon>
        <taxon>Vertebrata</taxon>
        <taxon>Euteleostomi</taxon>
        <taxon>Mammalia</taxon>
        <taxon>Eutheria</taxon>
        <taxon>Laurasiatheria</taxon>
        <taxon>Artiodactyla</taxon>
        <taxon>Ruminantia</taxon>
        <taxon>Pecora</taxon>
        <taxon>Bovidae</taxon>
        <taxon>Bovinae</taxon>
        <taxon>Bos</taxon>
    </lineage>
</organism>
<comment type="function">
    <text evidence="1">Necessary for early peroxisomal biogenesis. Acts both as a cytosolic chaperone and as an import receptor for peroxisomal membrane proteins (PMPs). Binds and stabilizes newly synthesized PMPs in the cytoplasm by interacting with their hydrophobic membrane-spanning domains, and targets them to the peroxisome membrane by binding to the integral membrane protein PEX3. Excludes CDKN2A from the nucleus and prevents its interaction with MDM2, which results in active degradation of TP53 (By similarity).</text>
</comment>
<comment type="subunit">
    <text evidence="1">Interacts with a broad range of peroxisomal membrane proteins, including PEX3, PEX10, PEX11A, PEX11B, PEX12, PEX13, PEX14 and PEX16, PXMP2/PMP22, PXMP4/PMP24, SLC25A17/PMP34, ABCD1/ALDP, ABCD2/ALDRP, and ABCD3/PMP70. Also interacts with the tumor suppressor CDKN2A/p19ARF (By similarity).</text>
</comment>
<comment type="subcellular location">
    <subcellularLocation>
        <location evidence="1">Cytoplasm</location>
    </subcellularLocation>
    <subcellularLocation>
        <location evidence="1">Peroxisome membrane</location>
        <topology evidence="1">Lipid-anchor</topology>
        <orientation evidence="1">Cytoplasmic side</orientation>
    </subcellularLocation>
    <text evidence="1">Mainly cytoplasmic. Some fraction membrane-associated to the outer surface of peroxisomes.</text>
</comment>
<comment type="similarity">
    <text evidence="6">Belongs to the peroxin-19 family.</text>
</comment>
<dbReference type="EMBL" id="BC102949">
    <property type="protein sequence ID" value="AAI02950.1"/>
    <property type="molecule type" value="mRNA"/>
</dbReference>
<dbReference type="RefSeq" id="NP_001029712.1">
    <property type="nucleotide sequence ID" value="NM_001034540.2"/>
</dbReference>
<dbReference type="SMR" id="Q3SZD1"/>
<dbReference type="FunCoup" id="Q3SZD1">
    <property type="interactions" value="2613"/>
</dbReference>
<dbReference type="STRING" id="9913.ENSBTAP00000009921"/>
<dbReference type="PaxDb" id="9913-ENSBTAP00000009921"/>
<dbReference type="PeptideAtlas" id="Q3SZD1"/>
<dbReference type="Ensembl" id="ENSBTAT00000009921.4">
    <property type="protein sequence ID" value="ENSBTAP00000009921.2"/>
    <property type="gene ID" value="ENSBTAG00000007537.4"/>
</dbReference>
<dbReference type="GeneID" id="521522"/>
<dbReference type="KEGG" id="bta:521522"/>
<dbReference type="CTD" id="5824"/>
<dbReference type="VEuPathDB" id="HostDB:ENSBTAG00000007537"/>
<dbReference type="VGNC" id="VGNC:32758">
    <property type="gene designation" value="PEX19"/>
</dbReference>
<dbReference type="eggNOG" id="KOG3133">
    <property type="taxonomic scope" value="Eukaryota"/>
</dbReference>
<dbReference type="GeneTree" id="ENSGT00390000010993"/>
<dbReference type="HOGENOM" id="CLU_043063_3_0_1"/>
<dbReference type="InParanoid" id="Q3SZD1"/>
<dbReference type="OMA" id="YEPMKEM"/>
<dbReference type="OrthoDB" id="21292at2759"/>
<dbReference type="TreeFam" id="TF315082"/>
<dbReference type="Reactome" id="R-BTA-1369062">
    <property type="pathway name" value="ABC transporters in lipid homeostasis"/>
</dbReference>
<dbReference type="Reactome" id="R-BTA-9603798">
    <property type="pathway name" value="Class I peroxisomal membrane protein import"/>
</dbReference>
<dbReference type="Proteomes" id="UP000009136">
    <property type="component" value="Chromosome 3"/>
</dbReference>
<dbReference type="Bgee" id="ENSBTAG00000007537">
    <property type="expression patterns" value="Expressed in gluteus medius and 103 other cell types or tissues"/>
</dbReference>
<dbReference type="GO" id="GO:0005737">
    <property type="term" value="C:cytoplasm"/>
    <property type="evidence" value="ECO:0000250"/>
    <property type="project" value="UniProtKB"/>
</dbReference>
<dbReference type="GO" id="GO:0005829">
    <property type="term" value="C:cytosol"/>
    <property type="evidence" value="ECO:0007669"/>
    <property type="project" value="Ensembl"/>
</dbReference>
<dbReference type="GO" id="GO:0016020">
    <property type="term" value="C:membrane"/>
    <property type="evidence" value="ECO:0000250"/>
    <property type="project" value="UniProtKB"/>
</dbReference>
<dbReference type="GO" id="GO:0005654">
    <property type="term" value="C:nucleoplasm"/>
    <property type="evidence" value="ECO:0007669"/>
    <property type="project" value="Ensembl"/>
</dbReference>
<dbReference type="GO" id="GO:0005634">
    <property type="term" value="C:nucleus"/>
    <property type="evidence" value="ECO:0000250"/>
    <property type="project" value="UniProtKB"/>
</dbReference>
<dbReference type="GO" id="GO:0005778">
    <property type="term" value="C:peroxisomal membrane"/>
    <property type="evidence" value="ECO:0000250"/>
    <property type="project" value="UniProtKB"/>
</dbReference>
<dbReference type="GO" id="GO:0032991">
    <property type="term" value="C:protein-containing complex"/>
    <property type="evidence" value="ECO:0007669"/>
    <property type="project" value="Ensembl"/>
</dbReference>
<dbReference type="GO" id="GO:0051117">
    <property type="term" value="F:ATPase binding"/>
    <property type="evidence" value="ECO:0007669"/>
    <property type="project" value="Ensembl"/>
</dbReference>
<dbReference type="GO" id="GO:0036105">
    <property type="term" value="F:peroxisome membrane class-1 targeting sequence binding"/>
    <property type="evidence" value="ECO:0007669"/>
    <property type="project" value="Ensembl"/>
</dbReference>
<dbReference type="GO" id="GO:0033328">
    <property type="term" value="F:peroxisome membrane targeting sequence binding"/>
    <property type="evidence" value="ECO:0000318"/>
    <property type="project" value="GO_Central"/>
</dbReference>
<dbReference type="GO" id="GO:0140597">
    <property type="term" value="F:protein carrier chaperone"/>
    <property type="evidence" value="ECO:0007669"/>
    <property type="project" value="Ensembl"/>
</dbReference>
<dbReference type="GO" id="GO:0061077">
    <property type="term" value="P:chaperone-mediated protein folding"/>
    <property type="evidence" value="ECO:0007669"/>
    <property type="project" value="Ensembl"/>
</dbReference>
<dbReference type="GO" id="GO:0016559">
    <property type="term" value="P:peroxisome fission"/>
    <property type="evidence" value="ECO:0007669"/>
    <property type="project" value="Ensembl"/>
</dbReference>
<dbReference type="GO" id="GO:0016557">
    <property type="term" value="P:peroxisome membrane biogenesis"/>
    <property type="evidence" value="ECO:0000250"/>
    <property type="project" value="UniProtKB"/>
</dbReference>
<dbReference type="GO" id="GO:0007031">
    <property type="term" value="P:peroxisome organization"/>
    <property type="evidence" value="ECO:0000250"/>
    <property type="project" value="UniProtKB"/>
</dbReference>
<dbReference type="GO" id="GO:0045046">
    <property type="term" value="P:protein import into peroxisome membrane"/>
    <property type="evidence" value="ECO:0000318"/>
    <property type="project" value="GO_Central"/>
</dbReference>
<dbReference type="GO" id="GO:0050821">
    <property type="term" value="P:protein stabilization"/>
    <property type="evidence" value="ECO:0007669"/>
    <property type="project" value="Ensembl"/>
</dbReference>
<dbReference type="GO" id="GO:0006625">
    <property type="term" value="P:protein targeting to peroxisome"/>
    <property type="evidence" value="ECO:0000250"/>
    <property type="project" value="UniProtKB"/>
</dbReference>
<dbReference type="FunFam" id="1.20.120.900:FF:000001">
    <property type="entry name" value="Putative peroxisomal biogenesis factor 19"/>
    <property type="match status" value="1"/>
</dbReference>
<dbReference type="Gene3D" id="1.20.120.900">
    <property type="entry name" value="Pex19, mPTS binding domain"/>
    <property type="match status" value="1"/>
</dbReference>
<dbReference type="InterPro" id="IPR006708">
    <property type="entry name" value="Pex19"/>
</dbReference>
<dbReference type="InterPro" id="IPR038322">
    <property type="entry name" value="Pex19_C_sf"/>
</dbReference>
<dbReference type="PANTHER" id="PTHR12774">
    <property type="entry name" value="PEROXISOMAL BIOGENESIS FACTOR 19"/>
    <property type="match status" value="1"/>
</dbReference>
<dbReference type="PANTHER" id="PTHR12774:SF2">
    <property type="entry name" value="PEROXISOMAL BIOGENESIS FACTOR 19"/>
    <property type="match status" value="1"/>
</dbReference>
<dbReference type="Pfam" id="PF04614">
    <property type="entry name" value="Pex19"/>
    <property type="match status" value="1"/>
</dbReference>